<accession>F4JN26</accession>
<accession>O81785</accession>
<name>MLH3_ARATH</name>
<evidence type="ECO:0000250" key="1"/>
<evidence type="ECO:0000269" key="2">
    <source>
    </source>
</evidence>
<evidence type="ECO:0000269" key="3">
    <source>
    </source>
</evidence>
<evidence type="ECO:0000269" key="4">
    <source>
    </source>
</evidence>
<evidence type="ECO:0000305" key="5"/>
<reference key="1">
    <citation type="journal article" date="1999" name="Nature">
        <title>Sequence and analysis of chromosome 4 of the plant Arabidopsis thaliana.</title>
        <authorList>
            <person name="Mayer K.F.X."/>
            <person name="Schueller C."/>
            <person name="Wambutt R."/>
            <person name="Murphy G."/>
            <person name="Volckaert G."/>
            <person name="Pohl T."/>
            <person name="Duesterhoeft A."/>
            <person name="Stiekema W."/>
            <person name="Entian K.-D."/>
            <person name="Terryn N."/>
            <person name="Harris B."/>
            <person name="Ansorge W."/>
            <person name="Brandt P."/>
            <person name="Grivell L.A."/>
            <person name="Rieger M."/>
            <person name="Weichselgartner M."/>
            <person name="de Simone V."/>
            <person name="Obermaier B."/>
            <person name="Mache R."/>
            <person name="Mueller M."/>
            <person name="Kreis M."/>
            <person name="Delseny M."/>
            <person name="Puigdomenech P."/>
            <person name="Watson M."/>
            <person name="Schmidtheini T."/>
            <person name="Reichert B."/>
            <person name="Portetelle D."/>
            <person name="Perez-Alonso M."/>
            <person name="Boutry M."/>
            <person name="Bancroft I."/>
            <person name="Vos P."/>
            <person name="Hoheisel J."/>
            <person name="Zimmermann W."/>
            <person name="Wedler H."/>
            <person name="Ridley P."/>
            <person name="Langham S.-A."/>
            <person name="McCullagh B."/>
            <person name="Bilham L."/>
            <person name="Robben J."/>
            <person name="van der Schueren J."/>
            <person name="Grymonprez B."/>
            <person name="Chuang Y.-J."/>
            <person name="Vandenbussche F."/>
            <person name="Braeken M."/>
            <person name="Weltjens I."/>
            <person name="Voet M."/>
            <person name="Bastiaens I."/>
            <person name="Aert R."/>
            <person name="Defoor E."/>
            <person name="Weitzenegger T."/>
            <person name="Bothe G."/>
            <person name="Ramsperger U."/>
            <person name="Hilbert H."/>
            <person name="Braun M."/>
            <person name="Holzer E."/>
            <person name="Brandt A."/>
            <person name="Peters S."/>
            <person name="van Staveren M."/>
            <person name="Dirkse W."/>
            <person name="Mooijman P."/>
            <person name="Klein Lankhorst R."/>
            <person name="Rose M."/>
            <person name="Hauf J."/>
            <person name="Koetter P."/>
            <person name="Berneiser S."/>
            <person name="Hempel S."/>
            <person name="Feldpausch M."/>
            <person name="Lamberth S."/>
            <person name="Van den Daele H."/>
            <person name="De Keyser A."/>
            <person name="Buysshaert C."/>
            <person name="Gielen J."/>
            <person name="Villarroel R."/>
            <person name="De Clercq R."/>
            <person name="van Montagu M."/>
            <person name="Rogers J."/>
            <person name="Cronin A."/>
            <person name="Quail M.A."/>
            <person name="Bray-Allen S."/>
            <person name="Clark L."/>
            <person name="Doggett J."/>
            <person name="Hall S."/>
            <person name="Kay M."/>
            <person name="Lennard N."/>
            <person name="McLay K."/>
            <person name="Mayes R."/>
            <person name="Pettett A."/>
            <person name="Rajandream M.A."/>
            <person name="Lyne M."/>
            <person name="Benes V."/>
            <person name="Rechmann S."/>
            <person name="Borkova D."/>
            <person name="Bloecker H."/>
            <person name="Scharfe M."/>
            <person name="Grimm M."/>
            <person name="Loehnert T.-H."/>
            <person name="Dose S."/>
            <person name="de Haan M."/>
            <person name="Maarse A.C."/>
            <person name="Schaefer M."/>
            <person name="Mueller-Auer S."/>
            <person name="Gabel C."/>
            <person name="Fuchs M."/>
            <person name="Fartmann B."/>
            <person name="Granderath K."/>
            <person name="Dauner D."/>
            <person name="Herzl A."/>
            <person name="Neumann S."/>
            <person name="Argiriou A."/>
            <person name="Vitale D."/>
            <person name="Liguori R."/>
            <person name="Piravandi E."/>
            <person name="Massenet O."/>
            <person name="Quigley F."/>
            <person name="Clabauld G."/>
            <person name="Muendlein A."/>
            <person name="Felber R."/>
            <person name="Schnabl S."/>
            <person name="Hiller R."/>
            <person name="Schmidt W."/>
            <person name="Lecharny A."/>
            <person name="Aubourg S."/>
            <person name="Chefdor F."/>
            <person name="Cooke R."/>
            <person name="Berger C."/>
            <person name="Monfort A."/>
            <person name="Casacuberta E."/>
            <person name="Gibbons T."/>
            <person name="Weber N."/>
            <person name="Vandenbol M."/>
            <person name="Bargues M."/>
            <person name="Terol J."/>
            <person name="Torres A."/>
            <person name="Perez-Perez A."/>
            <person name="Purnelle B."/>
            <person name="Bent E."/>
            <person name="Johnson S."/>
            <person name="Tacon D."/>
            <person name="Jesse T."/>
            <person name="Heijnen L."/>
            <person name="Schwarz S."/>
            <person name="Scholler P."/>
            <person name="Heber S."/>
            <person name="Francs P."/>
            <person name="Bielke C."/>
            <person name="Frishman D."/>
            <person name="Haase D."/>
            <person name="Lemcke K."/>
            <person name="Mewes H.-W."/>
            <person name="Stocker S."/>
            <person name="Zaccaria P."/>
            <person name="Bevan M."/>
            <person name="Wilson R.K."/>
            <person name="de la Bastide M."/>
            <person name="Habermann K."/>
            <person name="Parnell L."/>
            <person name="Dedhia N."/>
            <person name="Gnoj L."/>
            <person name="Schutz K."/>
            <person name="Huang E."/>
            <person name="Spiegel L."/>
            <person name="Sekhon M."/>
            <person name="Murray J."/>
            <person name="Sheet P."/>
            <person name="Cordes M."/>
            <person name="Abu-Threideh J."/>
            <person name="Stoneking T."/>
            <person name="Kalicki J."/>
            <person name="Graves T."/>
            <person name="Harmon G."/>
            <person name="Edwards J."/>
            <person name="Latreille P."/>
            <person name="Courtney L."/>
            <person name="Cloud J."/>
            <person name="Abbott A."/>
            <person name="Scott K."/>
            <person name="Johnson D."/>
            <person name="Minx P."/>
            <person name="Bentley D."/>
            <person name="Fulton B."/>
            <person name="Miller N."/>
            <person name="Greco T."/>
            <person name="Kemp K."/>
            <person name="Kramer J."/>
            <person name="Fulton L."/>
            <person name="Mardis E."/>
            <person name="Dante M."/>
            <person name="Pepin K."/>
            <person name="Hillier L.W."/>
            <person name="Nelson J."/>
            <person name="Spieth J."/>
            <person name="Ryan E."/>
            <person name="Andrews S."/>
            <person name="Geisel C."/>
            <person name="Layman D."/>
            <person name="Du H."/>
            <person name="Ali J."/>
            <person name="Berghoff A."/>
            <person name="Jones K."/>
            <person name="Drone K."/>
            <person name="Cotton M."/>
            <person name="Joshu C."/>
            <person name="Antonoiu B."/>
            <person name="Zidanic M."/>
            <person name="Strong C."/>
            <person name="Sun H."/>
            <person name="Lamar B."/>
            <person name="Yordan C."/>
            <person name="Ma P."/>
            <person name="Zhong J."/>
            <person name="Preston R."/>
            <person name="Vil D."/>
            <person name="Shekher M."/>
            <person name="Matero A."/>
            <person name="Shah R."/>
            <person name="Swaby I.K."/>
            <person name="O'Shaughnessy A."/>
            <person name="Rodriguez M."/>
            <person name="Hoffman J."/>
            <person name="Till S."/>
            <person name="Granat S."/>
            <person name="Shohdy N."/>
            <person name="Hasegawa A."/>
            <person name="Hameed A."/>
            <person name="Lodhi M."/>
            <person name="Johnson A."/>
            <person name="Chen E."/>
            <person name="Marra M.A."/>
            <person name="Martienssen R."/>
            <person name="McCombie W.R."/>
        </authorList>
    </citation>
    <scope>NUCLEOTIDE SEQUENCE [LARGE SCALE GENOMIC DNA]</scope>
    <source>
        <strain>cv. Columbia</strain>
    </source>
</reference>
<reference key="2">
    <citation type="journal article" date="2017" name="Plant J.">
        <title>Araport11: a complete reannotation of the Arabidopsis thaliana reference genome.</title>
        <authorList>
            <person name="Cheng C.Y."/>
            <person name="Krishnakumar V."/>
            <person name="Chan A.P."/>
            <person name="Thibaud-Nissen F."/>
            <person name="Schobel S."/>
            <person name="Town C.D."/>
        </authorList>
    </citation>
    <scope>GENOME REANNOTATION</scope>
    <source>
        <strain>cv. Columbia</strain>
    </source>
</reference>
<reference key="3">
    <citation type="journal article" date="2006" name="Biochem. Soc. Trans.">
        <title>Control of meiotic recombination in Arabidopsis: role of the MutL and MutS homologues.</title>
        <authorList>
            <person name="Franklin F.C."/>
            <person name="Higgins J.D."/>
            <person name="Sanchez-Moran E."/>
            <person name="Armstrong S.J."/>
            <person name="Osman K.E."/>
            <person name="Jackson N."/>
            <person name="Jones G.H."/>
        </authorList>
    </citation>
    <scope>DEVELOPMENTAL STAGE</scope>
    <scope>DISRUPTION PHENOTYPE</scope>
    <scope>SUBCELLULAR LOCATION</scope>
    <scope>FUNCTION</scope>
</reference>
<reference key="4">
    <citation type="journal article" date="2006" name="EMBO J.">
        <title>Reduced meiotic crossovers and delayed prophase I progression in AtMLH3-deficient Arabidopsis.</title>
        <authorList>
            <person name="Jackson N."/>
            <person name="Sanchez-Moran E."/>
            <person name="Buckling E."/>
            <person name="Armstrong S.J."/>
            <person name="Jones G.H."/>
            <person name="Franklin F.C."/>
        </authorList>
    </citation>
    <scope>TISSUE SPECIFICITY</scope>
    <scope>SUBCELLULAR LOCATION</scope>
    <scope>DEVELOPMENTAL STAGE</scope>
    <scope>DISRUPTION PHENOTYPE</scope>
    <scope>FUNCTION</scope>
</reference>
<reference key="5">
    <citation type="journal article" date="2011" name="J. Cell Sci.">
        <title>SHOC1 and PTD form an XPF-ERCC1-like complex that is required for formation of class I crossovers.</title>
        <authorList>
            <person name="Macaisne N."/>
            <person name="Vignard J."/>
            <person name="Mercier R."/>
        </authorList>
    </citation>
    <scope>DISRUPTION PHENOTYPE</scope>
</reference>
<comment type="function">
    <text evidence="2 3">Involved in DNA mismatch repair (MMR), correcting insertion-deletion loops (IDLs) resulting from DNA replication, DNA damage or from recombination events between non-identical sequences during meiosis. Component of the MutLbeta heterodimer, which probably forms a ternary complex with the MutSbeta heterodimer that initially recognizes the DNA mismatches. This complex is thought to be responsible for directing the downstream MMR events, including strand discrimination, excision, and resynthesis. Plays a major role in promoting meiotic crossing-over and is involved in maintaining the genetic stability of simple sequence repeats by correction of frameshift intermediates.</text>
</comment>
<comment type="subunit">
    <text evidence="1">Heterodimer of MLH1 and MLH3, called MutLbeta, which is involved in correction of a specific subset of IDLs when associated with MutSbeta.</text>
</comment>
<comment type="subcellular location">
    <subcellularLocation>
        <location evidence="2 3">Nucleus</location>
    </subcellularLocation>
</comment>
<comment type="tissue specificity">
    <text evidence="2">Expressed in reproductive tissues.</text>
</comment>
<comment type="developmental stage">
    <text evidence="2 3">Expressed during prophase I of meiosis.</text>
</comment>
<comment type="disruption phenotype">
    <text evidence="2 3 4">Reduced fertility and meiotic defects: 60 per cent reduction in crossovers and delayed prophase I progression.</text>
</comment>
<comment type="similarity">
    <text evidence="5">Belongs to the DNA mismatch repair MutL/HexB family.</text>
</comment>
<comment type="sequence caution" evidence="5">
    <conflict type="erroneous gene model prediction">
        <sequence resource="EMBL-CDS" id="CAA20022"/>
    </conflict>
</comment>
<comment type="sequence caution" evidence="5">
    <conflict type="erroneous gene model prediction">
        <sequence resource="EMBL-CDS" id="CAB80268"/>
    </conflict>
</comment>
<gene>
    <name type="primary">MLH3</name>
    <name type="ordered locus">At4g35520</name>
    <name type="ORF">F8D20.30</name>
</gene>
<sequence>MKTIKPLPEGVRHSMRSGIIMFDMARVVEELVFNSLDAGATKVSIFVGVVSCSVKVVDDGSGVSRDDLVLLGERYATSKFHDFTNVETASETFGFRGEALASISDISLLEVRTKAIGRPNGYRKVMKGSKCLHLGIDDDRKDSGTTVTVRDLFYSQPVRRKYMQSSPKKVLESIKKCVFRIALVHSNVSFSVLDIESDEELFQTNPSSSAFSLLMRDAGTEAVNSLCKVNVTDGMLNVSGFECADDWKPTDGQQTGRRNRLQSNPGYILCIACPRRLYEFSFEPSKTHVEFKKWGPVLAFIERITLANWKKDRILELFDGGADILAKGDRQDLIDDKIRLQNGSLFSILHFLDADWPEAMEPAKKKLKRSNDHAPCSSLLFPSADFKQDGDYFSPRKDVWSPECEVELKIQNPKEQGTVAGFESRTDSLLQSRDIEMQTNEDFPQVTDLLETSLVADSKCRKQFLTRCQITTPVNINHDFMKDSDVLNFQFQGLKDELDVSNCIGKHLLRGCSSRVSLTFHEPKLSHVEGYESVVPMIPNEKQSSPRVLETREGGSYCDVYSDKTPDCSLGSSWQDTDWFTPQCSSDRGCVGIGEDFNITPIDTAEFDSYDEKVGSKKYLSSVNVGSSVTGSFCLSSEWSPMYSTPSATKWESEYQKGCRILEQSLRLGRMPDPEFCFSAANNIKFDHEVIPEMDCCETGTDSFTAIQNCTQLADKICKSSWGHADDVRIDQYSIRKEKFSYMDGTQNNAGKQRSKRSRSAPPFYREKKRFISLSCKSDTKPKNSDPSEPDDLECLTQPCNASQMHLKCSILDDVSYDHIQETEKRLSSASDLKASAGCRTVHSETQDEDVHEDFSSEEFLDPIKSTTKWRHNCAVSQVPKESHELHGQDGVFDISSGLLHLRSDESLVPESINRHSLEDAKVLQQVDKKYIPIVACGTVAIVDQHAADERIRLEELRTKVLAGKARTVTYLSADQELVLPEMGYQLLQSYSEQIRDWGWICNITVEGSTSFKKNMSIIQRKPTPITLNAVPCILGVNLSDVDLLEFLQQLADTDGSSTIPPSVLRVLNSKACRGAIMFGDSLLPSECSLIIDGLKQTSLCFQCAHGRPTTVPLVDLKALHKQIAKLSGRQVWHGLQRREITLDRAKSRLDNAKS</sequence>
<keyword id="KW-0227">DNA damage</keyword>
<keyword id="KW-0234">DNA repair</keyword>
<keyword id="KW-0539">Nucleus</keyword>
<keyword id="KW-1185">Reference proteome</keyword>
<proteinExistence type="evidence at transcript level"/>
<feature type="chain" id="PRO_0000421834" description="DNA mismatch repair protein MLH3">
    <location>
        <begin position="1"/>
        <end position="1155"/>
    </location>
</feature>
<protein>
    <recommendedName>
        <fullName>DNA mismatch repair protein MLH3</fullName>
    </recommendedName>
    <alternativeName>
        <fullName>MutL protein homolog 3</fullName>
    </alternativeName>
</protein>
<organism>
    <name type="scientific">Arabidopsis thaliana</name>
    <name type="common">Mouse-ear cress</name>
    <dbReference type="NCBI Taxonomy" id="3702"/>
    <lineage>
        <taxon>Eukaryota</taxon>
        <taxon>Viridiplantae</taxon>
        <taxon>Streptophyta</taxon>
        <taxon>Embryophyta</taxon>
        <taxon>Tracheophyta</taxon>
        <taxon>Spermatophyta</taxon>
        <taxon>Magnoliopsida</taxon>
        <taxon>eudicotyledons</taxon>
        <taxon>Gunneridae</taxon>
        <taxon>Pentapetalae</taxon>
        <taxon>rosids</taxon>
        <taxon>malvids</taxon>
        <taxon>Brassicales</taxon>
        <taxon>Brassicaceae</taxon>
        <taxon>Camelineae</taxon>
        <taxon>Arabidopsis</taxon>
    </lineage>
</organism>
<dbReference type="EMBL" id="AL031135">
    <property type="protein sequence ID" value="CAA20022.1"/>
    <property type="status" value="ALT_SEQ"/>
    <property type="molecule type" value="Genomic_DNA"/>
</dbReference>
<dbReference type="EMBL" id="AL161587">
    <property type="protein sequence ID" value="CAB80268.1"/>
    <property type="status" value="ALT_SEQ"/>
    <property type="molecule type" value="Genomic_DNA"/>
</dbReference>
<dbReference type="EMBL" id="CP002687">
    <property type="protein sequence ID" value="AEE86526.2"/>
    <property type="molecule type" value="Genomic_DNA"/>
</dbReference>
<dbReference type="PIR" id="T04657">
    <property type="entry name" value="T04657"/>
</dbReference>
<dbReference type="RefSeq" id="NP_001320143.1">
    <property type="nucleotide sequence ID" value="NM_001342354.1"/>
</dbReference>
<dbReference type="SMR" id="F4JN26"/>
<dbReference type="FunCoup" id="F4JN26">
    <property type="interactions" value="2398"/>
</dbReference>
<dbReference type="STRING" id="3702.F4JN26"/>
<dbReference type="GlyGen" id="F4JN26">
    <property type="glycosylation" value="1 site"/>
</dbReference>
<dbReference type="iPTMnet" id="F4JN26"/>
<dbReference type="PaxDb" id="3702-AT4G35520.1"/>
<dbReference type="EnsemblPlants" id="AT4G35520.1">
    <property type="protein sequence ID" value="AT4G35520.1"/>
    <property type="gene ID" value="AT4G35520"/>
</dbReference>
<dbReference type="GeneID" id="829704"/>
<dbReference type="Gramene" id="AT4G35520.1">
    <property type="protein sequence ID" value="AT4G35520.1"/>
    <property type="gene ID" value="AT4G35520"/>
</dbReference>
<dbReference type="KEGG" id="ath:AT4G35520"/>
<dbReference type="Araport" id="AT4G35520"/>
<dbReference type="TAIR" id="AT4G35520">
    <property type="gene designation" value="MLH3"/>
</dbReference>
<dbReference type="eggNOG" id="KOG1977">
    <property type="taxonomic scope" value="Eukaryota"/>
</dbReference>
<dbReference type="HOGENOM" id="CLU_009113_0_0_1"/>
<dbReference type="InParanoid" id="F4JN26"/>
<dbReference type="PRO" id="PR:F4JN26"/>
<dbReference type="Proteomes" id="UP000006548">
    <property type="component" value="Chromosome 4"/>
</dbReference>
<dbReference type="ExpressionAtlas" id="F4JN26">
    <property type="expression patterns" value="baseline and differential"/>
</dbReference>
<dbReference type="GO" id="GO:0005694">
    <property type="term" value="C:chromosome"/>
    <property type="evidence" value="ECO:0000314"/>
    <property type="project" value="TAIR"/>
</dbReference>
<dbReference type="GO" id="GO:0032300">
    <property type="term" value="C:mismatch repair complex"/>
    <property type="evidence" value="ECO:0007669"/>
    <property type="project" value="InterPro"/>
</dbReference>
<dbReference type="GO" id="GO:0005634">
    <property type="term" value="C:nucleus"/>
    <property type="evidence" value="ECO:0007669"/>
    <property type="project" value="UniProtKB-SubCell"/>
</dbReference>
<dbReference type="GO" id="GO:0005524">
    <property type="term" value="F:ATP binding"/>
    <property type="evidence" value="ECO:0007669"/>
    <property type="project" value="InterPro"/>
</dbReference>
<dbReference type="GO" id="GO:0016887">
    <property type="term" value="F:ATP hydrolysis activity"/>
    <property type="evidence" value="ECO:0007669"/>
    <property type="project" value="InterPro"/>
</dbReference>
<dbReference type="GO" id="GO:0140664">
    <property type="term" value="F:ATP-dependent DNA damage sensor activity"/>
    <property type="evidence" value="ECO:0007669"/>
    <property type="project" value="InterPro"/>
</dbReference>
<dbReference type="GO" id="GO:0006298">
    <property type="term" value="P:mismatch repair"/>
    <property type="evidence" value="ECO:0007669"/>
    <property type="project" value="InterPro"/>
</dbReference>
<dbReference type="GO" id="GO:0007131">
    <property type="term" value="P:reciprocal meiotic recombination"/>
    <property type="evidence" value="ECO:0000315"/>
    <property type="project" value="TAIR"/>
</dbReference>
<dbReference type="CDD" id="cd16926">
    <property type="entry name" value="HATPase_MutL-MLH-PMS-like"/>
    <property type="match status" value="1"/>
</dbReference>
<dbReference type="FunFam" id="3.30.565.10:FF:000003">
    <property type="entry name" value="DNA mismatch repair endonuclease MutL"/>
    <property type="match status" value="1"/>
</dbReference>
<dbReference type="FunFam" id="3.30.1370.100:FF:000007">
    <property type="entry name" value="MUTL protein homolog 3"/>
    <property type="match status" value="1"/>
</dbReference>
<dbReference type="Gene3D" id="3.30.230.10">
    <property type="match status" value="1"/>
</dbReference>
<dbReference type="Gene3D" id="3.30.565.10">
    <property type="entry name" value="Histidine kinase-like ATPase, C-terminal domain"/>
    <property type="match status" value="1"/>
</dbReference>
<dbReference type="Gene3D" id="3.30.1540.20">
    <property type="entry name" value="MutL, C-terminal domain, dimerisation subdomain"/>
    <property type="match status" value="1"/>
</dbReference>
<dbReference type="Gene3D" id="3.30.1370.100">
    <property type="entry name" value="MutL, C-terminal domain, regulatory subdomain"/>
    <property type="match status" value="1"/>
</dbReference>
<dbReference type="InterPro" id="IPR014762">
    <property type="entry name" value="DNA_mismatch_repair_CS"/>
</dbReference>
<dbReference type="InterPro" id="IPR036890">
    <property type="entry name" value="HATPase_C_sf"/>
</dbReference>
<dbReference type="InterPro" id="IPR038973">
    <property type="entry name" value="MutL/Mlh/Pms-like"/>
</dbReference>
<dbReference type="InterPro" id="IPR014790">
    <property type="entry name" value="MutL_C"/>
</dbReference>
<dbReference type="InterPro" id="IPR042120">
    <property type="entry name" value="MutL_C_dimsub"/>
</dbReference>
<dbReference type="InterPro" id="IPR042121">
    <property type="entry name" value="MutL_C_regsub"/>
</dbReference>
<dbReference type="InterPro" id="IPR037198">
    <property type="entry name" value="MutL_C_sf"/>
</dbReference>
<dbReference type="InterPro" id="IPR014721">
    <property type="entry name" value="Ribsml_uS5_D2-typ_fold_subgr"/>
</dbReference>
<dbReference type="PANTHER" id="PTHR10073">
    <property type="entry name" value="DNA MISMATCH REPAIR PROTEIN MLH, PMS, MUTL"/>
    <property type="match status" value="1"/>
</dbReference>
<dbReference type="PANTHER" id="PTHR10073:SF47">
    <property type="entry name" value="DNA MISMATCH REPAIR PROTEIN MLH3"/>
    <property type="match status" value="1"/>
</dbReference>
<dbReference type="Pfam" id="PF13589">
    <property type="entry name" value="HATPase_c_3"/>
    <property type="match status" value="1"/>
</dbReference>
<dbReference type="Pfam" id="PF08676">
    <property type="entry name" value="MutL_C"/>
    <property type="match status" value="1"/>
</dbReference>
<dbReference type="SMART" id="SM00853">
    <property type="entry name" value="MutL_C"/>
    <property type="match status" value="1"/>
</dbReference>
<dbReference type="SUPFAM" id="SSF55874">
    <property type="entry name" value="ATPase domain of HSP90 chaperone/DNA topoisomerase II/histidine kinase"/>
    <property type="match status" value="1"/>
</dbReference>
<dbReference type="SUPFAM" id="SSF118116">
    <property type="entry name" value="DNA mismatch repair protein MutL"/>
    <property type="match status" value="1"/>
</dbReference>
<dbReference type="PROSITE" id="PS00058">
    <property type="entry name" value="DNA_MISMATCH_REPAIR_1"/>
    <property type="match status" value="1"/>
</dbReference>